<reference key="1">
    <citation type="journal article" date="2006" name="J. Bacteriol.">
        <title>Complete genome sequence of Yersinia pestis strains Antiqua and Nepal516: evidence of gene reduction in an emerging pathogen.</title>
        <authorList>
            <person name="Chain P.S.G."/>
            <person name="Hu P."/>
            <person name="Malfatti S.A."/>
            <person name="Radnedge L."/>
            <person name="Larimer F."/>
            <person name="Vergez L.M."/>
            <person name="Worsham P."/>
            <person name="Chu M.C."/>
            <person name="Andersen G.L."/>
        </authorList>
    </citation>
    <scope>NUCLEOTIDE SEQUENCE [LARGE SCALE GENOMIC DNA]</scope>
    <source>
        <strain>Antiqua</strain>
    </source>
</reference>
<dbReference type="EC" id="2.3.1.234" evidence="1"/>
<dbReference type="EMBL" id="CP000308">
    <property type="protein sequence ID" value="ABG15106.1"/>
    <property type="molecule type" value="Genomic_DNA"/>
</dbReference>
<dbReference type="RefSeq" id="WP_002212201.1">
    <property type="nucleotide sequence ID" value="NZ_CP009906.1"/>
</dbReference>
<dbReference type="SMR" id="Q1C366"/>
<dbReference type="GeneID" id="57973978"/>
<dbReference type="KEGG" id="ypa:YPA_3144"/>
<dbReference type="Proteomes" id="UP000001971">
    <property type="component" value="Chromosome"/>
</dbReference>
<dbReference type="GO" id="GO:0005737">
    <property type="term" value="C:cytoplasm"/>
    <property type="evidence" value="ECO:0007669"/>
    <property type="project" value="UniProtKB-SubCell"/>
</dbReference>
<dbReference type="GO" id="GO:0005506">
    <property type="term" value="F:iron ion binding"/>
    <property type="evidence" value="ECO:0007669"/>
    <property type="project" value="UniProtKB-UniRule"/>
</dbReference>
<dbReference type="GO" id="GO:0061711">
    <property type="term" value="F:N(6)-L-threonylcarbamoyladenine synthase activity"/>
    <property type="evidence" value="ECO:0007669"/>
    <property type="project" value="UniProtKB-EC"/>
</dbReference>
<dbReference type="GO" id="GO:0002949">
    <property type="term" value="P:tRNA threonylcarbamoyladenosine modification"/>
    <property type="evidence" value="ECO:0007669"/>
    <property type="project" value="UniProtKB-UniRule"/>
</dbReference>
<dbReference type="CDD" id="cd24133">
    <property type="entry name" value="ASKHA_NBD_TsaD_bac"/>
    <property type="match status" value="1"/>
</dbReference>
<dbReference type="FunFam" id="3.30.420.40:FF:000031">
    <property type="entry name" value="tRNA N6-adenosine threonylcarbamoyltransferase"/>
    <property type="match status" value="1"/>
</dbReference>
<dbReference type="Gene3D" id="3.30.420.40">
    <property type="match status" value="2"/>
</dbReference>
<dbReference type="HAMAP" id="MF_01445">
    <property type="entry name" value="TsaD"/>
    <property type="match status" value="1"/>
</dbReference>
<dbReference type="InterPro" id="IPR043129">
    <property type="entry name" value="ATPase_NBD"/>
</dbReference>
<dbReference type="InterPro" id="IPR000905">
    <property type="entry name" value="Gcp-like_dom"/>
</dbReference>
<dbReference type="InterPro" id="IPR017861">
    <property type="entry name" value="KAE1/TsaD"/>
</dbReference>
<dbReference type="InterPro" id="IPR017860">
    <property type="entry name" value="Peptidase_M22_CS"/>
</dbReference>
<dbReference type="InterPro" id="IPR022450">
    <property type="entry name" value="TsaD"/>
</dbReference>
<dbReference type="NCBIfam" id="TIGR00329">
    <property type="entry name" value="gcp_kae1"/>
    <property type="match status" value="1"/>
</dbReference>
<dbReference type="NCBIfam" id="TIGR03723">
    <property type="entry name" value="T6A_TsaD_YgjD"/>
    <property type="match status" value="1"/>
</dbReference>
<dbReference type="PANTHER" id="PTHR11735">
    <property type="entry name" value="TRNA N6-ADENOSINE THREONYLCARBAMOYLTRANSFERASE"/>
    <property type="match status" value="1"/>
</dbReference>
<dbReference type="PANTHER" id="PTHR11735:SF6">
    <property type="entry name" value="TRNA N6-ADENOSINE THREONYLCARBAMOYLTRANSFERASE, MITOCHONDRIAL"/>
    <property type="match status" value="1"/>
</dbReference>
<dbReference type="Pfam" id="PF00814">
    <property type="entry name" value="TsaD"/>
    <property type="match status" value="1"/>
</dbReference>
<dbReference type="PRINTS" id="PR00789">
    <property type="entry name" value="OSIALOPTASE"/>
</dbReference>
<dbReference type="SUPFAM" id="SSF53067">
    <property type="entry name" value="Actin-like ATPase domain"/>
    <property type="match status" value="1"/>
</dbReference>
<dbReference type="PROSITE" id="PS01016">
    <property type="entry name" value="GLYCOPROTEASE"/>
    <property type="match status" value="1"/>
</dbReference>
<sequence>MRVLGIETSCDETGIAVYDDKAGLLANQLYSQVKLHADYGGVVPELASRDHVRKTVPLIQAALKEANLSAKDIDAVAYTAGPGLVGALLVGATIGRALAFAWGVPAVPVHHMEGHLLAPMLEENAPEFPFVALLVSGGHTQLISVTGIGEYLLLGESVDDAAGEAFDKTAKLLGLDYPGGPMLSRMAQQGTVGRFTFPRPMTDRPGLDFSFSGLKTFAANTIRANGDDDQTRADIARAFEDAVVDTLAIKSKRALDQTGFKRLVIAGGVSANQTLRLKLADMMQKRGGEVFYARPEFCTDNGAMIAYAGMVRLRSNLNSELSVSVRPRWPLSELPKV</sequence>
<accession>Q1C366</accession>
<proteinExistence type="inferred from homology"/>
<feature type="chain" id="PRO_0000303625" description="tRNA N6-adenosine threonylcarbamoyltransferase">
    <location>
        <begin position="1"/>
        <end position="337"/>
    </location>
</feature>
<feature type="binding site" evidence="1">
    <location>
        <position position="111"/>
    </location>
    <ligand>
        <name>Fe cation</name>
        <dbReference type="ChEBI" id="CHEBI:24875"/>
    </ligand>
</feature>
<feature type="binding site" evidence="1">
    <location>
        <position position="115"/>
    </location>
    <ligand>
        <name>Fe cation</name>
        <dbReference type="ChEBI" id="CHEBI:24875"/>
    </ligand>
</feature>
<feature type="binding site" evidence="1">
    <location>
        <begin position="134"/>
        <end position="138"/>
    </location>
    <ligand>
        <name>substrate</name>
    </ligand>
</feature>
<feature type="binding site" evidence="1">
    <location>
        <position position="167"/>
    </location>
    <ligand>
        <name>substrate</name>
    </ligand>
</feature>
<feature type="binding site" evidence="1">
    <location>
        <position position="180"/>
    </location>
    <ligand>
        <name>substrate</name>
    </ligand>
</feature>
<feature type="binding site" evidence="1">
    <location>
        <position position="272"/>
    </location>
    <ligand>
        <name>substrate</name>
    </ligand>
</feature>
<feature type="binding site" evidence="1">
    <location>
        <position position="300"/>
    </location>
    <ligand>
        <name>Fe cation</name>
        <dbReference type="ChEBI" id="CHEBI:24875"/>
    </ligand>
</feature>
<keyword id="KW-0012">Acyltransferase</keyword>
<keyword id="KW-0963">Cytoplasm</keyword>
<keyword id="KW-0408">Iron</keyword>
<keyword id="KW-0479">Metal-binding</keyword>
<keyword id="KW-0808">Transferase</keyword>
<keyword id="KW-0819">tRNA processing</keyword>
<name>TSAD_YERPA</name>
<protein>
    <recommendedName>
        <fullName evidence="1">tRNA N6-adenosine threonylcarbamoyltransferase</fullName>
        <ecNumber evidence="1">2.3.1.234</ecNumber>
    </recommendedName>
    <alternativeName>
        <fullName evidence="1">N6-L-threonylcarbamoyladenine synthase</fullName>
        <shortName evidence="1">t(6)A synthase</shortName>
    </alternativeName>
    <alternativeName>
        <fullName evidence="1">t(6)A37 threonylcarbamoyladenosine biosynthesis protein TsaD</fullName>
    </alternativeName>
    <alternativeName>
        <fullName evidence="1">tRNA threonylcarbamoyladenosine biosynthesis protein TsaD</fullName>
    </alternativeName>
</protein>
<organism>
    <name type="scientific">Yersinia pestis bv. Antiqua (strain Antiqua)</name>
    <dbReference type="NCBI Taxonomy" id="360102"/>
    <lineage>
        <taxon>Bacteria</taxon>
        <taxon>Pseudomonadati</taxon>
        <taxon>Pseudomonadota</taxon>
        <taxon>Gammaproteobacteria</taxon>
        <taxon>Enterobacterales</taxon>
        <taxon>Yersiniaceae</taxon>
        <taxon>Yersinia</taxon>
    </lineage>
</organism>
<comment type="function">
    <text evidence="1">Required for the formation of a threonylcarbamoyl group on adenosine at position 37 (t(6)A37) in tRNAs that read codons beginning with adenine. Is involved in the transfer of the threonylcarbamoyl moiety of threonylcarbamoyl-AMP (TC-AMP) to the N6 group of A37, together with TsaE and TsaB. TsaD likely plays a direct catalytic role in this reaction.</text>
</comment>
<comment type="catalytic activity">
    <reaction evidence="1">
        <text>L-threonylcarbamoyladenylate + adenosine(37) in tRNA = N(6)-L-threonylcarbamoyladenosine(37) in tRNA + AMP + H(+)</text>
        <dbReference type="Rhea" id="RHEA:37059"/>
        <dbReference type="Rhea" id="RHEA-COMP:10162"/>
        <dbReference type="Rhea" id="RHEA-COMP:10163"/>
        <dbReference type="ChEBI" id="CHEBI:15378"/>
        <dbReference type="ChEBI" id="CHEBI:73682"/>
        <dbReference type="ChEBI" id="CHEBI:74411"/>
        <dbReference type="ChEBI" id="CHEBI:74418"/>
        <dbReference type="ChEBI" id="CHEBI:456215"/>
        <dbReference type="EC" id="2.3.1.234"/>
    </reaction>
</comment>
<comment type="cofactor">
    <cofactor evidence="1">
        <name>Fe(2+)</name>
        <dbReference type="ChEBI" id="CHEBI:29033"/>
    </cofactor>
    <text evidence="1">Binds 1 Fe(2+) ion per subunit.</text>
</comment>
<comment type="subcellular location">
    <subcellularLocation>
        <location evidence="1">Cytoplasm</location>
    </subcellularLocation>
</comment>
<comment type="similarity">
    <text evidence="1">Belongs to the KAE1 / TsaD family.</text>
</comment>
<gene>
    <name evidence="1" type="primary">tsaD</name>
    <name type="synonym">gcp</name>
    <name type="ordered locus">YPA_3144</name>
</gene>
<evidence type="ECO:0000255" key="1">
    <source>
        <dbReference type="HAMAP-Rule" id="MF_01445"/>
    </source>
</evidence>